<accession>B4TV53</accession>
<evidence type="ECO:0000255" key="1">
    <source>
        <dbReference type="HAMAP-Rule" id="MF_01418"/>
    </source>
</evidence>
<dbReference type="EC" id="3.5.3.11" evidence="1"/>
<dbReference type="EMBL" id="CP001127">
    <property type="protein sequence ID" value="ACF91868.1"/>
    <property type="molecule type" value="Genomic_DNA"/>
</dbReference>
<dbReference type="RefSeq" id="WP_000105550.1">
    <property type="nucleotide sequence ID" value="NC_011094.1"/>
</dbReference>
<dbReference type="SMR" id="B4TV53"/>
<dbReference type="KEGG" id="sew:SeSA_A3258"/>
<dbReference type="HOGENOM" id="CLU_039478_0_0_6"/>
<dbReference type="UniPathway" id="UPA00534">
    <property type="reaction ID" value="UER00287"/>
</dbReference>
<dbReference type="Proteomes" id="UP000001865">
    <property type="component" value="Chromosome"/>
</dbReference>
<dbReference type="GO" id="GO:0008783">
    <property type="term" value="F:agmatinase activity"/>
    <property type="evidence" value="ECO:0007669"/>
    <property type="project" value="UniProtKB-UniRule"/>
</dbReference>
<dbReference type="GO" id="GO:0030145">
    <property type="term" value="F:manganese ion binding"/>
    <property type="evidence" value="ECO:0007669"/>
    <property type="project" value="InterPro"/>
</dbReference>
<dbReference type="GO" id="GO:0033389">
    <property type="term" value="P:putrescine biosynthetic process from arginine, via agmatine"/>
    <property type="evidence" value="ECO:0007669"/>
    <property type="project" value="TreeGrafter"/>
</dbReference>
<dbReference type="GO" id="GO:0008295">
    <property type="term" value="P:spermidine biosynthetic process"/>
    <property type="evidence" value="ECO:0007669"/>
    <property type="project" value="UniProtKB-UniRule"/>
</dbReference>
<dbReference type="CDD" id="cd11592">
    <property type="entry name" value="Agmatinase_PAH"/>
    <property type="match status" value="1"/>
</dbReference>
<dbReference type="FunFam" id="3.40.800.10:FF:000001">
    <property type="entry name" value="Agmatinase"/>
    <property type="match status" value="1"/>
</dbReference>
<dbReference type="Gene3D" id="3.40.800.10">
    <property type="entry name" value="Ureohydrolase domain"/>
    <property type="match status" value="1"/>
</dbReference>
<dbReference type="HAMAP" id="MF_01418">
    <property type="entry name" value="SpeB"/>
    <property type="match status" value="1"/>
</dbReference>
<dbReference type="InterPro" id="IPR023694">
    <property type="entry name" value="Agmatinase"/>
</dbReference>
<dbReference type="InterPro" id="IPR005925">
    <property type="entry name" value="Agmatinase-rel"/>
</dbReference>
<dbReference type="InterPro" id="IPR006035">
    <property type="entry name" value="Ureohydrolase"/>
</dbReference>
<dbReference type="InterPro" id="IPR023696">
    <property type="entry name" value="Ureohydrolase_dom_sf"/>
</dbReference>
<dbReference type="InterPro" id="IPR020855">
    <property type="entry name" value="Ureohydrolase_Mn_BS"/>
</dbReference>
<dbReference type="NCBIfam" id="TIGR01230">
    <property type="entry name" value="agmatinase"/>
    <property type="match status" value="1"/>
</dbReference>
<dbReference type="NCBIfam" id="NF002564">
    <property type="entry name" value="PRK02190.1"/>
    <property type="match status" value="1"/>
</dbReference>
<dbReference type="PANTHER" id="PTHR11358">
    <property type="entry name" value="ARGINASE/AGMATINASE"/>
    <property type="match status" value="1"/>
</dbReference>
<dbReference type="PANTHER" id="PTHR11358:SF26">
    <property type="entry name" value="GUANIDINO ACID HYDROLASE, MITOCHONDRIAL"/>
    <property type="match status" value="1"/>
</dbReference>
<dbReference type="Pfam" id="PF00491">
    <property type="entry name" value="Arginase"/>
    <property type="match status" value="1"/>
</dbReference>
<dbReference type="PIRSF" id="PIRSF036979">
    <property type="entry name" value="Arginase"/>
    <property type="match status" value="1"/>
</dbReference>
<dbReference type="SUPFAM" id="SSF52768">
    <property type="entry name" value="Arginase/deacetylase"/>
    <property type="match status" value="1"/>
</dbReference>
<dbReference type="PROSITE" id="PS01053">
    <property type="entry name" value="ARGINASE_1"/>
    <property type="match status" value="1"/>
</dbReference>
<dbReference type="PROSITE" id="PS51409">
    <property type="entry name" value="ARGINASE_2"/>
    <property type="match status" value="1"/>
</dbReference>
<comment type="function">
    <text evidence="1">Catalyzes the formation of putrescine from agmatine.</text>
</comment>
<comment type="catalytic activity">
    <reaction evidence="1">
        <text>agmatine + H2O = urea + putrescine</text>
        <dbReference type="Rhea" id="RHEA:13929"/>
        <dbReference type="ChEBI" id="CHEBI:15377"/>
        <dbReference type="ChEBI" id="CHEBI:16199"/>
        <dbReference type="ChEBI" id="CHEBI:58145"/>
        <dbReference type="ChEBI" id="CHEBI:326268"/>
        <dbReference type="EC" id="3.5.3.11"/>
    </reaction>
</comment>
<comment type="cofactor">
    <cofactor evidence="1">
        <name>Mn(2+)</name>
        <dbReference type="ChEBI" id="CHEBI:29035"/>
    </cofactor>
</comment>
<comment type="pathway">
    <text evidence="1">Amine and polyamine biosynthesis; putrescine biosynthesis via agmatine pathway; putrescine from agmatine: step 1/1.</text>
</comment>
<comment type="similarity">
    <text evidence="1">Belongs to the arginase family. Agmatinase subfamily.</text>
</comment>
<gene>
    <name evidence="1" type="primary">speB</name>
    <name type="ordered locus">SeSA_A3258</name>
</gene>
<keyword id="KW-0378">Hydrolase</keyword>
<keyword id="KW-0464">Manganese</keyword>
<keyword id="KW-0479">Metal-binding</keyword>
<keyword id="KW-0620">Polyamine biosynthesis</keyword>
<keyword id="KW-0661">Putrescine biosynthesis</keyword>
<keyword id="KW-0745">Spermidine biosynthesis</keyword>
<protein>
    <recommendedName>
        <fullName evidence="1">Agmatinase</fullName>
        <ecNumber evidence="1">3.5.3.11</ecNumber>
    </recommendedName>
    <alternativeName>
        <fullName evidence="1">Agmatine ureohydrolase</fullName>
        <shortName evidence="1">AUH</shortName>
    </alternativeName>
</protein>
<name>SPEB_SALSV</name>
<proteinExistence type="inferred from homology"/>
<sequence length="306" mass="33603">MSTLGHQYDNSLVSNAFGFLRLPMNFQPYDSDADWVITGVPFDMATSGRAGGRHGPAAIRQVSTNLAWEHHRFPWNFDMRERLNVVDCGDLVYAFGDAREMSEKLQAHAEKLLSAGKRMLSFGGDHFVTLPLLRAHAKHFGKMALVHFDAHTDTYANGCEFDHGTMFYTAPKEGLIDPHHSVQIGIRTEFDKDNGFTVLDACQVNDRGVDDILAQVKQIVGDMPVYLTFDIDCLDPAFAPGTGTPVIGGLTSDRAIKLVRGLKDLNIVGMDVVEVAPAYDQSEITALAAATLALEMLYIQAAKKGE</sequence>
<reference key="1">
    <citation type="journal article" date="2011" name="J. Bacteriol.">
        <title>Comparative genomics of 28 Salmonella enterica isolates: evidence for CRISPR-mediated adaptive sublineage evolution.</title>
        <authorList>
            <person name="Fricke W.F."/>
            <person name="Mammel M.K."/>
            <person name="McDermott P.F."/>
            <person name="Tartera C."/>
            <person name="White D.G."/>
            <person name="Leclerc J.E."/>
            <person name="Ravel J."/>
            <person name="Cebula T.A."/>
        </authorList>
    </citation>
    <scope>NUCLEOTIDE SEQUENCE [LARGE SCALE GENOMIC DNA]</scope>
    <source>
        <strain>CVM19633</strain>
    </source>
</reference>
<organism>
    <name type="scientific">Salmonella schwarzengrund (strain CVM19633)</name>
    <dbReference type="NCBI Taxonomy" id="439843"/>
    <lineage>
        <taxon>Bacteria</taxon>
        <taxon>Pseudomonadati</taxon>
        <taxon>Pseudomonadota</taxon>
        <taxon>Gammaproteobacteria</taxon>
        <taxon>Enterobacterales</taxon>
        <taxon>Enterobacteriaceae</taxon>
        <taxon>Salmonella</taxon>
    </lineage>
</organism>
<feature type="chain" id="PRO_1000145626" description="Agmatinase">
    <location>
        <begin position="1"/>
        <end position="306"/>
    </location>
</feature>
<feature type="binding site" evidence="1">
    <location>
        <position position="126"/>
    </location>
    <ligand>
        <name>Mn(2+)</name>
        <dbReference type="ChEBI" id="CHEBI:29035"/>
    </ligand>
</feature>
<feature type="binding site" evidence="1">
    <location>
        <position position="149"/>
    </location>
    <ligand>
        <name>Mn(2+)</name>
        <dbReference type="ChEBI" id="CHEBI:29035"/>
    </ligand>
</feature>
<feature type="binding site" evidence="1">
    <location>
        <position position="151"/>
    </location>
    <ligand>
        <name>Mn(2+)</name>
        <dbReference type="ChEBI" id="CHEBI:29035"/>
    </ligand>
</feature>
<feature type="binding site" evidence="1">
    <location>
        <position position="153"/>
    </location>
    <ligand>
        <name>Mn(2+)</name>
        <dbReference type="ChEBI" id="CHEBI:29035"/>
    </ligand>
</feature>
<feature type="binding site" evidence="1">
    <location>
        <position position="230"/>
    </location>
    <ligand>
        <name>Mn(2+)</name>
        <dbReference type="ChEBI" id="CHEBI:29035"/>
    </ligand>
</feature>
<feature type="binding site" evidence="1">
    <location>
        <position position="232"/>
    </location>
    <ligand>
        <name>Mn(2+)</name>
        <dbReference type="ChEBI" id="CHEBI:29035"/>
    </ligand>
</feature>